<organism>
    <name type="scientific">Synechococcus sp. (strain WH7803)</name>
    <dbReference type="NCBI Taxonomy" id="32051"/>
    <lineage>
        <taxon>Bacteria</taxon>
        <taxon>Bacillati</taxon>
        <taxon>Cyanobacteriota</taxon>
        <taxon>Cyanophyceae</taxon>
        <taxon>Synechococcales</taxon>
        <taxon>Synechococcaceae</taxon>
        <taxon>Synechococcus</taxon>
    </lineage>
</organism>
<evidence type="ECO:0000255" key="1">
    <source>
        <dbReference type="HAMAP-Rule" id="MF_01200"/>
    </source>
</evidence>
<sequence length="243" mass="24786">MASLRSAHPADRIIVALDGMAPEQALAFAAQVEGLRWVKVGLELFVQAGPEVVAQLREQGLRVFLDLKFHDIPATMAGACRRAAALGAELITVHACAGSEALKAAQAAAVEGAQGAGQPAPTLLAVTVLTSWEEQRLQRELAITQGIAERVPALAQLSATAGIGGCVCSPLEAAALRAQHPEPFALVTPGIRPKGAAVGDQARVMGPAEAIAAGASQLVIGRPITKAEDPSAAFAACCGELLG</sequence>
<dbReference type="EC" id="4.1.1.23" evidence="1"/>
<dbReference type="EMBL" id="CT971583">
    <property type="protein sequence ID" value="CAK24368.1"/>
    <property type="molecule type" value="Genomic_DNA"/>
</dbReference>
<dbReference type="SMR" id="A5GN53"/>
<dbReference type="STRING" id="32051.SynWH7803_1942"/>
<dbReference type="KEGG" id="syx:SynWH7803_1942"/>
<dbReference type="eggNOG" id="COG0284">
    <property type="taxonomic scope" value="Bacteria"/>
</dbReference>
<dbReference type="HOGENOM" id="CLU_067069_1_0_3"/>
<dbReference type="OrthoDB" id="9806203at2"/>
<dbReference type="UniPathway" id="UPA00070">
    <property type="reaction ID" value="UER00120"/>
</dbReference>
<dbReference type="Proteomes" id="UP000001566">
    <property type="component" value="Chromosome"/>
</dbReference>
<dbReference type="GO" id="GO:0005829">
    <property type="term" value="C:cytosol"/>
    <property type="evidence" value="ECO:0007669"/>
    <property type="project" value="TreeGrafter"/>
</dbReference>
<dbReference type="GO" id="GO:0004590">
    <property type="term" value="F:orotidine-5'-phosphate decarboxylase activity"/>
    <property type="evidence" value="ECO:0007669"/>
    <property type="project" value="UniProtKB-UniRule"/>
</dbReference>
<dbReference type="GO" id="GO:0006207">
    <property type="term" value="P:'de novo' pyrimidine nucleobase biosynthetic process"/>
    <property type="evidence" value="ECO:0007669"/>
    <property type="project" value="InterPro"/>
</dbReference>
<dbReference type="GO" id="GO:0044205">
    <property type="term" value="P:'de novo' UMP biosynthetic process"/>
    <property type="evidence" value="ECO:0007669"/>
    <property type="project" value="UniProtKB-UniRule"/>
</dbReference>
<dbReference type="CDD" id="cd04725">
    <property type="entry name" value="OMP_decarboxylase_like"/>
    <property type="match status" value="1"/>
</dbReference>
<dbReference type="FunFam" id="3.20.20.70:FF:000015">
    <property type="entry name" value="Orotidine 5'-phosphate decarboxylase"/>
    <property type="match status" value="1"/>
</dbReference>
<dbReference type="Gene3D" id="3.20.20.70">
    <property type="entry name" value="Aldolase class I"/>
    <property type="match status" value="1"/>
</dbReference>
<dbReference type="HAMAP" id="MF_01200_B">
    <property type="entry name" value="OMPdecase_type1_B"/>
    <property type="match status" value="1"/>
</dbReference>
<dbReference type="InterPro" id="IPR013785">
    <property type="entry name" value="Aldolase_TIM"/>
</dbReference>
<dbReference type="InterPro" id="IPR014732">
    <property type="entry name" value="OMPdecase"/>
</dbReference>
<dbReference type="InterPro" id="IPR018089">
    <property type="entry name" value="OMPdecase_AS"/>
</dbReference>
<dbReference type="InterPro" id="IPR047596">
    <property type="entry name" value="OMPdecase_bac"/>
</dbReference>
<dbReference type="InterPro" id="IPR001754">
    <property type="entry name" value="OMPdeCOase_dom"/>
</dbReference>
<dbReference type="InterPro" id="IPR011060">
    <property type="entry name" value="RibuloseP-bd_barrel"/>
</dbReference>
<dbReference type="NCBIfam" id="NF001273">
    <property type="entry name" value="PRK00230.1"/>
    <property type="match status" value="1"/>
</dbReference>
<dbReference type="NCBIfam" id="TIGR01740">
    <property type="entry name" value="pyrF"/>
    <property type="match status" value="1"/>
</dbReference>
<dbReference type="PANTHER" id="PTHR32119">
    <property type="entry name" value="OROTIDINE 5'-PHOSPHATE DECARBOXYLASE"/>
    <property type="match status" value="1"/>
</dbReference>
<dbReference type="PANTHER" id="PTHR32119:SF2">
    <property type="entry name" value="OROTIDINE 5'-PHOSPHATE DECARBOXYLASE"/>
    <property type="match status" value="1"/>
</dbReference>
<dbReference type="Pfam" id="PF00215">
    <property type="entry name" value="OMPdecase"/>
    <property type="match status" value="1"/>
</dbReference>
<dbReference type="SMART" id="SM00934">
    <property type="entry name" value="OMPdecase"/>
    <property type="match status" value="1"/>
</dbReference>
<dbReference type="SUPFAM" id="SSF51366">
    <property type="entry name" value="Ribulose-phoshate binding barrel"/>
    <property type="match status" value="1"/>
</dbReference>
<dbReference type="PROSITE" id="PS00156">
    <property type="entry name" value="OMPDECASE"/>
    <property type="match status" value="1"/>
</dbReference>
<name>PYRF_SYNPW</name>
<feature type="chain" id="PRO_1000065956" description="Orotidine 5'-phosphate decarboxylase">
    <location>
        <begin position="1"/>
        <end position="243"/>
    </location>
</feature>
<feature type="active site" description="Proton donor" evidence="1">
    <location>
        <position position="68"/>
    </location>
</feature>
<feature type="binding site" evidence="1">
    <location>
        <position position="18"/>
    </location>
    <ligand>
        <name>substrate</name>
    </ligand>
</feature>
<feature type="binding site" evidence="1">
    <location>
        <position position="39"/>
    </location>
    <ligand>
        <name>substrate</name>
    </ligand>
</feature>
<feature type="binding site" evidence="1">
    <location>
        <begin position="66"/>
        <end position="75"/>
    </location>
    <ligand>
        <name>substrate</name>
    </ligand>
</feature>
<feature type="binding site" evidence="1">
    <location>
        <position position="130"/>
    </location>
    <ligand>
        <name>substrate</name>
    </ligand>
</feature>
<feature type="binding site" evidence="1">
    <location>
        <position position="192"/>
    </location>
    <ligand>
        <name>substrate</name>
    </ligand>
</feature>
<feature type="binding site" evidence="1">
    <location>
        <position position="201"/>
    </location>
    <ligand>
        <name>substrate</name>
    </ligand>
</feature>
<feature type="binding site" evidence="1">
    <location>
        <position position="221"/>
    </location>
    <ligand>
        <name>substrate</name>
    </ligand>
</feature>
<feature type="binding site" evidence="1">
    <location>
        <position position="222"/>
    </location>
    <ligand>
        <name>substrate</name>
    </ligand>
</feature>
<reference key="1">
    <citation type="submission" date="2006-05" db="EMBL/GenBank/DDBJ databases">
        <authorList>
            <consortium name="Genoscope"/>
        </authorList>
    </citation>
    <scope>NUCLEOTIDE SEQUENCE [LARGE SCALE GENOMIC DNA]</scope>
    <source>
        <strain>WH7803</strain>
    </source>
</reference>
<accession>A5GN53</accession>
<comment type="function">
    <text evidence="1">Catalyzes the decarboxylation of orotidine 5'-monophosphate (OMP) to uridine 5'-monophosphate (UMP).</text>
</comment>
<comment type="catalytic activity">
    <reaction evidence="1">
        <text>orotidine 5'-phosphate + H(+) = UMP + CO2</text>
        <dbReference type="Rhea" id="RHEA:11596"/>
        <dbReference type="ChEBI" id="CHEBI:15378"/>
        <dbReference type="ChEBI" id="CHEBI:16526"/>
        <dbReference type="ChEBI" id="CHEBI:57538"/>
        <dbReference type="ChEBI" id="CHEBI:57865"/>
        <dbReference type="EC" id="4.1.1.23"/>
    </reaction>
</comment>
<comment type="pathway">
    <text evidence="1">Pyrimidine metabolism; UMP biosynthesis via de novo pathway; UMP from orotate: step 2/2.</text>
</comment>
<comment type="subunit">
    <text evidence="1">Homodimer.</text>
</comment>
<comment type="similarity">
    <text evidence="1">Belongs to the OMP decarboxylase family. Type 1 subfamily.</text>
</comment>
<gene>
    <name evidence="1" type="primary">pyrF</name>
    <name type="ordered locus">SynWH7803_1942</name>
</gene>
<proteinExistence type="inferred from homology"/>
<protein>
    <recommendedName>
        <fullName evidence="1">Orotidine 5'-phosphate decarboxylase</fullName>
        <ecNumber evidence="1">4.1.1.23</ecNumber>
    </recommendedName>
    <alternativeName>
        <fullName evidence="1">OMP decarboxylase</fullName>
        <shortName evidence="1">OMPDCase</shortName>
        <shortName evidence="1">OMPdecase</shortName>
    </alternativeName>
</protein>
<keyword id="KW-0210">Decarboxylase</keyword>
<keyword id="KW-0456">Lyase</keyword>
<keyword id="KW-0665">Pyrimidine biosynthesis</keyword>
<keyword id="KW-1185">Reference proteome</keyword>